<protein>
    <recommendedName>
        <fullName>Olfactory receptor 9G1</fullName>
    </recommendedName>
    <alternativeName>
        <fullName>Olfactory receptor 9G5</fullName>
    </alternativeName>
    <alternativeName>
        <fullName>Olfactory receptor OR11-114</fullName>
    </alternativeName>
</protein>
<proteinExistence type="inferred from homology"/>
<organism>
    <name type="scientific">Homo sapiens</name>
    <name type="common">Human</name>
    <dbReference type="NCBI Taxonomy" id="9606"/>
    <lineage>
        <taxon>Eukaryota</taxon>
        <taxon>Metazoa</taxon>
        <taxon>Chordata</taxon>
        <taxon>Craniata</taxon>
        <taxon>Vertebrata</taxon>
        <taxon>Euteleostomi</taxon>
        <taxon>Mammalia</taxon>
        <taxon>Eutheria</taxon>
        <taxon>Euarchontoglires</taxon>
        <taxon>Primates</taxon>
        <taxon>Haplorrhini</taxon>
        <taxon>Catarrhini</taxon>
        <taxon>Hominidae</taxon>
        <taxon>Homo</taxon>
    </lineage>
</organism>
<evidence type="ECO:0000255" key="1"/>
<evidence type="ECO:0000255" key="2">
    <source>
        <dbReference type="PROSITE-ProRule" id="PRU00521"/>
    </source>
</evidence>
<evidence type="ECO:0000305" key="3"/>
<gene>
    <name type="primary">OR9G1</name>
    <name type="synonym">OR9G5</name>
</gene>
<name>OR9G1_HUMAN</name>
<sequence length="305" mass="34071">MQRSNHTVTEFILLGFTTDPGMQLGLFVVFLGVYSLTVVGNSTLIVLICNDSCLHTPMYFFTGNLSFLDLWYSSVYTPKILVTCISEDKSISFAGCLCQFFFSAGLAYSECYLLAAVAYDRYVAISKPLLYAQAMSIKLCALLVAVSYCGGFINSSIITKKTFSFNFCRENIIDDFFCDLLPLVELACGEKGGYKIMMYFLLASNVICPAVLILASYLFIITSVLRISSSKGYLKAFSTCSSHLTSVTLYYGSILYIYALPRSSYSFDMDKIVSTFYTVVFPMLNLMIYSLRNKDVKEALKKLLP</sequence>
<reference key="1">
    <citation type="submission" date="2001-07" db="EMBL/GenBank/DDBJ databases">
        <title>Genome-wide discovery and analysis of human seven transmembrane helix receptor genes.</title>
        <authorList>
            <person name="Suwa M."/>
            <person name="Sato T."/>
            <person name="Okouchi I."/>
            <person name="Arita M."/>
            <person name="Futami K."/>
            <person name="Matsumoto S."/>
            <person name="Tsutsumi S."/>
            <person name="Aburatani H."/>
            <person name="Asai K."/>
            <person name="Akiyama Y."/>
        </authorList>
    </citation>
    <scope>NUCLEOTIDE SEQUENCE [GENOMIC DNA]</scope>
</reference>
<reference key="2">
    <citation type="journal article" date="2004" name="Proc. Natl. Acad. Sci. U.S.A.">
        <title>The human olfactory receptor gene family.</title>
        <authorList>
            <person name="Malnic B."/>
            <person name="Godfrey P.A."/>
            <person name="Buck L.B."/>
        </authorList>
    </citation>
    <scope>IDENTIFICATION</scope>
</reference>
<reference key="3">
    <citation type="journal article" date="2004" name="Proc. Natl. Acad. Sci. U.S.A.">
        <authorList>
            <person name="Malnic B."/>
            <person name="Godfrey P.A."/>
            <person name="Buck L.B."/>
        </authorList>
    </citation>
    <scope>ERRATUM OF PUBMED:14983052</scope>
</reference>
<keyword id="KW-1003">Cell membrane</keyword>
<keyword id="KW-1015">Disulfide bond</keyword>
<keyword id="KW-0297">G-protein coupled receptor</keyword>
<keyword id="KW-0325">Glycoprotein</keyword>
<keyword id="KW-0472">Membrane</keyword>
<keyword id="KW-0552">Olfaction</keyword>
<keyword id="KW-0675">Receptor</keyword>
<keyword id="KW-1185">Reference proteome</keyword>
<keyword id="KW-0716">Sensory transduction</keyword>
<keyword id="KW-0807">Transducer</keyword>
<keyword id="KW-0812">Transmembrane</keyword>
<keyword id="KW-1133">Transmembrane helix</keyword>
<accession>Q8NH87</accession>
<accession>Q6IEU9</accession>
<accession>Q8NGQ0</accession>
<comment type="function">
    <text evidence="3">Odorant receptor.</text>
</comment>
<comment type="subcellular location">
    <subcellularLocation>
        <location>Cell membrane</location>
        <topology>Multi-pass membrane protein</topology>
    </subcellularLocation>
</comment>
<comment type="similarity">
    <text evidence="2">Belongs to the G-protein coupled receptor 1 family.</text>
</comment>
<comment type="online information" name="Human Olfactory Receptor Data Exploratorium (HORDE)">
    <link uri="http://genome.weizmann.ac.il/horde/card/index/symbol:OR9G1"/>
</comment>
<dbReference type="EMBL" id="AB065500">
    <property type="protein sequence ID" value="BAC05750.1"/>
    <property type="molecule type" value="Genomic_DNA"/>
</dbReference>
<dbReference type="EMBL" id="AB065739">
    <property type="protein sequence ID" value="BAC05960.1"/>
    <property type="molecule type" value="Genomic_DNA"/>
</dbReference>
<dbReference type="EMBL" id="BK004513">
    <property type="protein sequence ID" value="DAA04911.1"/>
    <property type="molecule type" value="Genomic_DNA"/>
</dbReference>
<dbReference type="CCDS" id="CCDS31536.1"/>
<dbReference type="RefSeq" id="NP_001005213.1">
    <property type="nucleotide sequence ID" value="NM_001005213.2"/>
</dbReference>
<dbReference type="SMR" id="Q8NH87"/>
<dbReference type="BioGRID" id="133432">
    <property type="interactions" value="1"/>
</dbReference>
<dbReference type="FunCoup" id="Q8NH87">
    <property type="interactions" value="523"/>
</dbReference>
<dbReference type="STRING" id="9606.ENSP00000493255"/>
<dbReference type="GlyCosmos" id="Q8NH87">
    <property type="glycosylation" value="1 site, No reported glycans"/>
</dbReference>
<dbReference type="GlyGen" id="Q8NH87">
    <property type="glycosylation" value="1 site"/>
</dbReference>
<dbReference type="iPTMnet" id="Q8NH87"/>
<dbReference type="PhosphoSitePlus" id="Q8NH87"/>
<dbReference type="BioMuta" id="OR9G1"/>
<dbReference type="DMDM" id="38372827"/>
<dbReference type="MassIVE" id="Q8NH87"/>
<dbReference type="PaxDb" id="9606-ENSP00000309012"/>
<dbReference type="Antibodypedia" id="62751">
    <property type="antibodies" value="59 antibodies from 16 providers"/>
</dbReference>
<dbReference type="DNASU" id="390174"/>
<dbReference type="Ensembl" id="ENST00000642097.1">
    <property type="protein sequence ID" value="ENSP00000493255.1"/>
    <property type="gene ID" value="ENSG00000174914.3"/>
</dbReference>
<dbReference type="GeneID" id="390174"/>
<dbReference type="KEGG" id="hsa:390174"/>
<dbReference type="MANE-Select" id="ENST00000642097.1">
    <property type="protein sequence ID" value="ENSP00000493255.1"/>
    <property type="RefSeq nucleotide sequence ID" value="NM_001005213.2"/>
    <property type="RefSeq protein sequence ID" value="NP_001005213.1"/>
</dbReference>
<dbReference type="UCSC" id="uc010rjn.2">
    <property type="organism name" value="human"/>
</dbReference>
<dbReference type="AGR" id="HGNC:15319"/>
<dbReference type="CTD" id="390174"/>
<dbReference type="DisGeNET" id="390174"/>
<dbReference type="GeneCards" id="OR9G1"/>
<dbReference type="HGNC" id="HGNC:15319">
    <property type="gene designation" value="OR9G1"/>
</dbReference>
<dbReference type="HPA" id="ENSG00000174914">
    <property type="expression patterns" value="Not detected"/>
</dbReference>
<dbReference type="neXtProt" id="NX_Q8NH87"/>
<dbReference type="OpenTargets" id="ENSG00000174914"/>
<dbReference type="PharmGKB" id="PA32788"/>
<dbReference type="VEuPathDB" id="HostDB:ENSG00000174914"/>
<dbReference type="eggNOG" id="ENOG502T862">
    <property type="taxonomic scope" value="Eukaryota"/>
</dbReference>
<dbReference type="GeneTree" id="ENSGT00940000154333"/>
<dbReference type="HOGENOM" id="CLU_012526_1_0_1"/>
<dbReference type="InParanoid" id="Q8NH87"/>
<dbReference type="OMA" id="TFSFNFC"/>
<dbReference type="PAN-GO" id="Q8NH87">
    <property type="GO annotations" value="0 GO annotations based on evolutionary models"/>
</dbReference>
<dbReference type="PhylomeDB" id="Q8NH87"/>
<dbReference type="TreeFam" id="TF352735"/>
<dbReference type="PathwayCommons" id="Q8NH87"/>
<dbReference type="Reactome" id="R-HSA-381753">
    <property type="pathway name" value="Olfactory Signaling Pathway"/>
</dbReference>
<dbReference type="Reactome" id="R-HSA-9752946">
    <property type="pathway name" value="Expression and translocation of olfactory receptors"/>
</dbReference>
<dbReference type="BioGRID-ORCS" id="390174">
    <property type="hits" value="10 hits in 722 CRISPR screens"/>
</dbReference>
<dbReference type="GeneWiki" id="OR9G1"/>
<dbReference type="GenomeRNAi" id="390174"/>
<dbReference type="Pharos" id="Q8NH87">
    <property type="development level" value="Tdark"/>
</dbReference>
<dbReference type="PRO" id="PR:Q8NH87"/>
<dbReference type="Proteomes" id="UP000005640">
    <property type="component" value="Chromosome 11"/>
</dbReference>
<dbReference type="RNAct" id="Q8NH87">
    <property type="molecule type" value="protein"/>
</dbReference>
<dbReference type="Bgee" id="ENSG00000174914">
    <property type="expression patterns" value="Expressed in male germ line stem cell (sensu Vertebrata) in testis"/>
</dbReference>
<dbReference type="GO" id="GO:0005886">
    <property type="term" value="C:plasma membrane"/>
    <property type="evidence" value="ECO:0000304"/>
    <property type="project" value="Reactome"/>
</dbReference>
<dbReference type="GO" id="GO:0004930">
    <property type="term" value="F:G protein-coupled receptor activity"/>
    <property type="evidence" value="ECO:0007669"/>
    <property type="project" value="UniProtKB-KW"/>
</dbReference>
<dbReference type="GO" id="GO:0004984">
    <property type="term" value="F:olfactory receptor activity"/>
    <property type="evidence" value="ECO:0007669"/>
    <property type="project" value="InterPro"/>
</dbReference>
<dbReference type="FunFam" id="1.10.1220.70:FF:000001">
    <property type="entry name" value="Olfactory receptor"/>
    <property type="match status" value="1"/>
</dbReference>
<dbReference type="FunFam" id="1.20.1070.10:FF:000003">
    <property type="entry name" value="Olfactory receptor"/>
    <property type="match status" value="1"/>
</dbReference>
<dbReference type="Gene3D" id="1.20.1070.10">
    <property type="entry name" value="Rhodopsin 7-helix transmembrane proteins"/>
    <property type="match status" value="1"/>
</dbReference>
<dbReference type="InterPro" id="IPR000276">
    <property type="entry name" value="GPCR_Rhodpsn"/>
</dbReference>
<dbReference type="InterPro" id="IPR017452">
    <property type="entry name" value="GPCR_Rhodpsn_7TM"/>
</dbReference>
<dbReference type="InterPro" id="IPR000725">
    <property type="entry name" value="Olfact_rcpt"/>
</dbReference>
<dbReference type="PANTHER" id="PTHR48018">
    <property type="entry name" value="OLFACTORY RECEPTOR"/>
    <property type="match status" value="1"/>
</dbReference>
<dbReference type="Pfam" id="PF13853">
    <property type="entry name" value="7tm_4"/>
    <property type="match status" value="1"/>
</dbReference>
<dbReference type="PRINTS" id="PR00237">
    <property type="entry name" value="GPCRRHODOPSN"/>
</dbReference>
<dbReference type="PRINTS" id="PR00245">
    <property type="entry name" value="OLFACTORYR"/>
</dbReference>
<dbReference type="SUPFAM" id="SSF81321">
    <property type="entry name" value="Family A G protein-coupled receptor-like"/>
    <property type="match status" value="1"/>
</dbReference>
<dbReference type="PROSITE" id="PS00237">
    <property type="entry name" value="G_PROTEIN_RECEP_F1_1"/>
    <property type="match status" value="1"/>
</dbReference>
<dbReference type="PROSITE" id="PS50262">
    <property type="entry name" value="G_PROTEIN_RECEP_F1_2"/>
    <property type="match status" value="1"/>
</dbReference>
<feature type="chain" id="PRO_0000150678" description="Olfactory receptor 9G1">
    <location>
        <begin position="1"/>
        <end position="305"/>
    </location>
</feature>
<feature type="topological domain" description="Extracellular" evidence="1">
    <location>
        <begin position="1"/>
        <end position="24"/>
    </location>
</feature>
<feature type="transmembrane region" description="Helical; Name=1" evidence="1">
    <location>
        <begin position="25"/>
        <end position="45"/>
    </location>
</feature>
<feature type="topological domain" description="Cytoplasmic" evidence="1">
    <location>
        <begin position="46"/>
        <end position="53"/>
    </location>
</feature>
<feature type="transmembrane region" description="Helical; Name=2" evidence="1">
    <location>
        <begin position="54"/>
        <end position="74"/>
    </location>
</feature>
<feature type="topological domain" description="Extracellular" evidence="1">
    <location>
        <begin position="75"/>
        <end position="98"/>
    </location>
</feature>
<feature type="transmembrane region" description="Helical; Name=3" evidence="1">
    <location>
        <begin position="99"/>
        <end position="119"/>
    </location>
</feature>
<feature type="topological domain" description="Cytoplasmic" evidence="1">
    <location>
        <begin position="120"/>
        <end position="138"/>
    </location>
</feature>
<feature type="transmembrane region" description="Helical; Name=4" evidence="1">
    <location>
        <begin position="139"/>
        <end position="159"/>
    </location>
</feature>
<feature type="topological domain" description="Extracellular" evidence="1">
    <location>
        <begin position="160"/>
        <end position="196"/>
    </location>
</feature>
<feature type="transmembrane region" description="Helical; Name=5" evidence="1">
    <location>
        <begin position="197"/>
        <end position="216"/>
    </location>
</feature>
<feature type="topological domain" description="Cytoplasmic" evidence="1">
    <location>
        <begin position="217"/>
        <end position="236"/>
    </location>
</feature>
<feature type="transmembrane region" description="Helical; Name=6" evidence="1">
    <location>
        <begin position="237"/>
        <end position="257"/>
    </location>
</feature>
<feature type="topological domain" description="Extracellular" evidence="1">
    <location>
        <begin position="258"/>
        <end position="270"/>
    </location>
</feature>
<feature type="transmembrane region" description="Helical; Name=7" evidence="1">
    <location>
        <begin position="271"/>
        <end position="291"/>
    </location>
</feature>
<feature type="topological domain" description="Cytoplasmic" evidence="1">
    <location>
        <begin position="292"/>
        <end position="305"/>
    </location>
</feature>
<feature type="glycosylation site" description="N-linked (GlcNAc...) asparagine" evidence="1">
    <location>
        <position position="5"/>
    </location>
</feature>
<feature type="disulfide bond" evidence="2">
    <location>
        <begin position="96"/>
        <end position="188"/>
    </location>
</feature>
<feature type="sequence variant" id="VAR_032777" description="In dbSNP:rs532637.">
    <original>C</original>
    <variation>R</variation>
    <location>
        <position position="53"/>
    </location>
</feature>
<feature type="sequence variant" id="VAR_060017" description="In dbSNP:rs532635.">
    <original>C</original>
    <variation>Y</variation>
    <location>
        <position position="53"/>
    </location>
</feature>
<feature type="sequence variant" id="VAR_032778" description="In dbSNP:rs3975155.">
    <original>F</original>
    <variation>V</variation>
    <location>
        <position position="61"/>
    </location>
</feature>
<feature type="sequence variant" id="VAR_060018" description="In dbSNP:rs2865520.">
    <original>T</original>
    <variation>I</variation>
    <location>
        <position position="62"/>
    </location>
</feature>
<feature type="sequence variant" id="VAR_032779" description="In dbSNP:rs602224.">
    <original>T</original>
    <variation>I</variation>
    <location>
        <position position="83"/>
    </location>
</feature>
<feature type="sequence variant" id="VAR_060019" description="In dbSNP:rs11228732.">
    <original>C</original>
    <variation>G</variation>
    <location>
        <position position="98"/>
    </location>
</feature>
<feature type="sequence variant" id="VAR_032780" description="In dbSNP:rs4990194.">
    <original>Y</original>
    <variation>C</variation>
    <location>
        <position position="112"/>
    </location>
</feature>
<feature type="sequence variant" id="VAR_032781" description="In dbSNP:rs591369.">
    <original>V</original>
    <variation>M</variation>
    <location>
        <position position="117"/>
    </location>
</feature>
<feature type="sequence variant" id="VAR_053254" description="In dbSNP:rs11228733.">
    <original>R</original>
    <variation>C</variation>
    <location>
        <position position="169"/>
    </location>
</feature>
<feature type="sequence variant" id="VAR_053255" description="In dbSNP:rs11228735.">
    <original>E</original>
    <variation>K</variation>
    <location>
        <position position="185"/>
    </location>
</feature>
<feature type="sequence variant" id="VAR_053256" description="In dbSNP:rs12420076.">
    <original>K</original>
    <variation>Q</variation>
    <location>
        <position position="231"/>
    </location>
</feature>
<feature type="sequence variant" id="VAR_060020" description="In dbSNP:rs10896517.">
    <original>Y</original>
    <variation>C</variation>
    <location>
        <position position="233"/>
    </location>
</feature>
<feature type="sequence variant" id="VAR_060021" description="In dbSNP:rs10896516.">
    <original>Y</original>
    <variation>H</variation>
    <location>
        <position position="233"/>
    </location>
</feature>
<feature type="sequence variant" id="VAR_034276" description="In dbSNP:rs7121276.">
    <original>A</original>
    <variation>S</variation>
    <location>
        <position position="259"/>
    </location>
</feature>
<feature type="sequence conflict" description="In Ref. 1; DAA04911/BAC05960." evidence="3" ref="1">
    <original>C</original>
    <variation>H</variation>
    <location>
        <position position="53"/>
    </location>
</feature>
<feature type="sequence conflict" description="In Ref. 1; DAA04911/BAC05960." evidence="3" ref="1">
    <original>T</original>
    <variation>V</variation>
    <location>
        <position position="62"/>
    </location>
</feature>